<organism>
    <name type="scientific">Bacillus anthracis</name>
    <dbReference type="NCBI Taxonomy" id="1392"/>
    <lineage>
        <taxon>Bacteria</taxon>
        <taxon>Bacillati</taxon>
        <taxon>Bacillota</taxon>
        <taxon>Bacilli</taxon>
        <taxon>Bacillales</taxon>
        <taxon>Bacillaceae</taxon>
        <taxon>Bacillus</taxon>
        <taxon>Bacillus cereus group</taxon>
    </lineage>
</organism>
<evidence type="ECO:0000255" key="1">
    <source>
        <dbReference type="HAMAP-Rule" id="MF_00049"/>
    </source>
</evidence>
<name>SYL_BACAN</name>
<proteinExistence type="inferred from homology"/>
<gene>
    <name evidence="1" type="primary">leuS</name>
    <name type="ordered locus">BA_4991</name>
    <name type="ordered locus">GBAA_4991</name>
    <name type="ordered locus">BAS4637</name>
</gene>
<reference key="1">
    <citation type="journal article" date="2003" name="Nature">
        <title>The genome sequence of Bacillus anthracis Ames and comparison to closely related bacteria.</title>
        <authorList>
            <person name="Read T.D."/>
            <person name="Peterson S.N."/>
            <person name="Tourasse N.J."/>
            <person name="Baillie L.W."/>
            <person name="Paulsen I.T."/>
            <person name="Nelson K.E."/>
            <person name="Tettelin H."/>
            <person name="Fouts D.E."/>
            <person name="Eisen J.A."/>
            <person name="Gill S.R."/>
            <person name="Holtzapple E.K."/>
            <person name="Okstad O.A."/>
            <person name="Helgason E."/>
            <person name="Rilstone J."/>
            <person name="Wu M."/>
            <person name="Kolonay J.F."/>
            <person name="Beanan M.J."/>
            <person name="Dodson R.J."/>
            <person name="Brinkac L.M."/>
            <person name="Gwinn M.L."/>
            <person name="DeBoy R.T."/>
            <person name="Madpu R."/>
            <person name="Daugherty S.C."/>
            <person name="Durkin A.S."/>
            <person name="Haft D.H."/>
            <person name="Nelson W.C."/>
            <person name="Peterson J.D."/>
            <person name="Pop M."/>
            <person name="Khouri H.M."/>
            <person name="Radune D."/>
            <person name="Benton J.L."/>
            <person name="Mahamoud Y."/>
            <person name="Jiang L."/>
            <person name="Hance I.R."/>
            <person name="Weidman J.F."/>
            <person name="Berry K.J."/>
            <person name="Plaut R.D."/>
            <person name="Wolf A.M."/>
            <person name="Watkins K.L."/>
            <person name="Nierman W.C."/>
            <person name="Hazen A."/>
            <person name="Cline R.T."/>
            <person name="Redmond C."/>
            <person name="Thwaite J.E."/>
            <person name="White O."/>
            <person name="Salzberg S.L."/>
            <person name="Thomason B."/>
            <person name="Friedlander A.M."/>
            <person name="Koehler T.M."/>
            <person name="Hanna P.C."/>
            <person name="Kolstoe A.-B."/>
            <person name="Fraser C.M."/>
        </authorList>
    </citation>
    <scope>NUCLEOTIDE SEQUENCE [LARGE SCALE GENOMIC DNA]</scope>
    <source>
        <strain>Ames / isolate Porton</strain>
    </source>
</reference>
<reference key="2">
    <citation type="journal article" date="2009" name="J. Bacteriol.">
        <title>The complete genome sequence of Bacillus anthracis Ames 'Ancestor'.</title>
        <authorList>
            <person name="Ravel J."/>
            <person name="Jiang L."/>
            <person name="Stanley S.T."/>
            <person name="Wilson M.R."/>
            <person name="Decker R.S."/>
            <person name="Read T.D."/>
            <person name="Worsham P."/>
            <person name="Keim P.S."/>
            <person name="Salzberg S.L."/>
            <person name="Fraser-Liggett C.M."/>
            <person name="Rasko D.A."/>
        </authorList>
    </citation>
    <scope>NUCLEOTIDE SEQUENCE [LARGE SCALE GENOMIC DNA]</scope>
    <source>
        <strain>Ames ancestor</strain>
    </source>
</reference>
<reference key="3">
    <citation type="submission" date="2004-01" db="EMBL/GenBank/DDBJ databases">
        <title>Complete genome sequence of Bacillus anthracis Sterne.</title>
        <authorList>
            <person name="Brettin T.S."/>
            <person name="Bruce D."/>
            <person name="Challacombe J.F."/>
            <person name="Gilna P."/>
            <person name="Han C."/>
            <person name="Hill K."/>
            <person name="Hitchcock P."/>
            <person name="Jackson P."/>
            <person name="Keim P."/>
            <person name="Longmire J."/>
            <person name="Lucas S."/>
            <person name="Okinaka R."/>
            <person name="Richardson P."/>
            <person name="Rubin E."/>
            <person name="Tice H."/>
        </authorList>
    </citation>
    <scope>NUCLEOTIDE SEQUENCE [LARGE SCALE GENOMIC DNA]</scope>
    <source>
        <strain>Sterne</strain>
    </source>
</reference>
<dbReference type="EC" id="6.1.1.4" evidence="1"/>
<dbReference type="EMBL" id="AE016879">
    <property type="protein sequence ID" value="AAP28671.1"/>
    <property type="molecule type" value="Genomic_DNA"/>
</dbReference>
<dbReference type="EMBL" id="AE017334">
    <property type="protein sequence ID" value="AAT34117.1"/>
    <property type="molecule type" value="Genomic_DNA"/>
</dbReference>
<dbReference type="EMBL" id="AE017225">
    <property type="protein sequence ID" value="AAT56931.1"/>
    <property type="molecule type" value="Genomic_DNA"/>
</dbReference>
<dbReference type="RefSeq" id="NP_847185.1">
    <property type="nucleotide sequence ID" value="NC_003997.3"/>
</dbReference>
<dbReference type="RefSeq" id="WP_000009448.1">
    <property type="nucleotide sequence ID" value="NZ_WXXJ01000026.1"/>
</dbReference>
<dbReference type="RefSeq" id="YP_030881.1">
    <property type="nucleotide sequence ID" value="NC_005945.1"/>
</dbReference>
<dbReference type="SMR" id="Q81KK6"/>
<dbReference type="IntAct" id="Q81KK6">
    <property type="interactions" value="3"/>
</dbReference>
<dbReference type="STRING" id="261594.GBAA_4991"/>
<dbReference type="DNASU" id="1084234"/>
<dbReference type="GeneID" id="45024607"/>
<dbReference type="KEGG" id="ban:BA_4991"/>
<dbReference type="KEGG" id="bar:GBAA_4991"/>
<dbReference type="KEGG" id="bat:BAS4637"/>
<dbReference type="PATRIC" id="fig|198094.11.peg.4952"/>
<dbReference type="eggNOG" id="COG0495">
    <property type="taxonomic scope" value="Bacteria"/>
</dbReference>
<dbReference type="HOGENOM" id="CLU_004427_0_0_9"/>
<dbReference type="OMA" id="GIEHACM"/>
<dbReference type="OrthoDB" id="9810365at2"/>
<dbReference type="Proteomes" id="UP000000427">
    <property type="component" value="Chromosome"/>
</dbReference>
<dbReference type="Proteomes" id="UP000000594">
    <property type="component" value="Chromosome"/>
</dbReference>
<dbReference type="GO" id="GO:0005829">
    <property type="term" value="C:cytosol"/>
    <property type="evidence" value="ECO:0007669"/>
    <property type="project" value="TreeGrafter"/>
</dbReference>
<dbReference type="GO" id="GO:0002161">
    <property type="term" value="F:aminoacyl-tRNA deacylase activity"/>
    <property type="evidence" value="ECO:0007669"/>
    <property type="project" value="InterPro"/>
</dbReference>
<dbReference type="GO" id="GO:0005524">
    <property type="term" value="F:ATP binding"/>
    <property type="evidence" value="ECO:0007669"/>
    <property type="project" value="UniProtKB-UniRule"/>
</dbReference>
<dbReference type="GO" id="GO:0004823">
    <property type="term" value="F:leucine-tRNA ligase activity"/>
    <property type="evidence" value="ECO:0007669"/>
    <property type="project" value="UniProtKB-UniRule"/>
</dbReference>
<dbReference type="GO" id="GO:0006429">
    <property type="term" value="P:leucyl-tRNA aminoacylation"/>
    <property type="evidence" value="ECO:0007669"/>
    <property type="project" value="UniProtKB-UniRule"/>
</dbReference>
<dbReference type="CDD" id="cd07958">
    <property type="entry name" value="Anticodon_Ia_Leu_BEm"/>
    <property type="match status" value="1"/>
</dbReference>
<dbReference type="CDD" id="cd00812">
    <property type="entry name" value="LeuRS_core"/>
    <property type="match status" value="1"/>
</dbReference>
<dbReference type="FunFam" id="1.10.730.10:FF:000012">
    <property type="entry name" value="Leucine--tRNA ligase"/>
    <property type="match status" value="1"/>
</dbReference>
<dbReference type="FunFam" id="1.10.730.10:FF:000018">
    <property type="entry name" value="Leucine--tRNA ligase"/>
    <property type="match status" value="1"/>
</dbReference>
<dbReference type="FunFam" id="3.10.20.590:FF:000001">
    <property type="entry name" value="Leucine--tRNA ligase"/>
    <property type="match status" value="1"/>
</dbReference>
<dbReference type="FunFam" id="3.40.50.620:FF:000056">
    <property type="entry name" value="Leucine--tRNA ligase"/>
    <property type="match status" value="1"/>
</dbReference>
<dbReference type="FunFam" id="3.40.50.620:FF:000077">
    <property type="entry name" value="Leucine--tRNA ligase"/>
    <property type="match status" value="1"/>
</dbReference>
<dbReference type="Gene3D" id="3.10.20.590">
    <property type="match status" value="1"/>
</dbReference>
<dbReference type="Gene3D" id="3.40.50.620">
    <property type="entry name" value="HUPs"/>
    <property type="match status" value="2"/>
</dbReference>
<dbReference type="Gene3D" id="1.10.730.10">
    <property type="entry name" value="Isoleucyl-tRNA Synthetase, Domain 1"/>
    <property type="match status" value="1"/>
</dbReference>
<dbReference type="HAMAP" id="MF_00049_B">
    <property type="entry name" value="Leu_tRNA_synth_B"/>
    <property type="match status" value="1"/>
</dbReference>
<dbReference type="InterPro" id="IPR001412">
    <property type="entry name" value="aa-tRNA-synth_I_CS"/>
</dbReference>
<dbReference type="InterPro" id="IPR002300">
    <property type="entry name" value="aa-tRNA-synth_Ia"/>
</dbReference>
<dbReference type="InterPro" id="IPR002302">
    <property type="entry name" value="Leu-tRNA-ligase"/>
</dbReference>
<dbReference type="InterPro" id="IPR025709">
    <property type="entry name" value="Leu_tRNA-synth_edit"/>
</dbReference>
<dbReference type="InterPro" id="IPR013155">
    <property type="entry name" value="M/V/L/I-tRNA-synth_anticd-bd"/>
</dbReference>
<dbReference type="InterPro" id="IPR015413">
    <property type="entry name" value="Methionyl/Leucyl_tRNA_Synth"/>
</dbReference>
<dbReference type="InterPro" id="IPR014729">
    <property type="entry name" value="Rossmann-like_a/b/a_fold"/>
</dbReference>
<dbReference type="InterPro" id="IPR009080">
    <property type="entry name" value="tRNAsynth_Ia_anticodon-bd"/>
</dbReference>
<dbReference type="InterPro" id="IPR009008">
    <property type="entry name" value="Val/Leu/Ile-tRNA-synth_edit"/>
</dbReference>
<dbReference type="NCBIfam" id="TIGR00396">
    <property type="entry name" value="leuS_bact"/>
    <property type="match status" value="1"/>
</dbReference>
<dbReference type="PANTHER" id="PTHR43740:SF2">
    <property type="entry name" value="LEUCINE--TRNA LIGASE, MITOCHONDRIAL"/>
    <property type="match status" value="1"/>
</dbReference>
<dbReference type="PANTHER" id="PTHR43740">
    <property type="entry name" value="LEUCYL-TRNA SYNTHETASE"/>
    <property type="match status" value="1"/>
</dbReference>
<dbReference type="Pfam" id="PF08264">
    <property type="entry name" value="Anticodon_1"/>
    <property type="match status" value="1"/>
</dbReference>
<dbReference type="Pfam" id="PF00133">
    <property type="entry name" value="tRNA-synt_1"/>
    <property type="match status" value="1"/>
</dbReference>
<dbReference type="Pfam" id="PF13603">
    <property type="entry name" value="tRNA-synt_1_2"/>
    <property type="match status" value="1"/>
</dbReference>
<dbReference type="Pfam" id="PF09334">
    <property type="entry name" value="tRNA-synt_1g"/>
    <property type="match status" value="1"/>
</dbReference>
<dbReference type="PRINTS" id="PR00985">
    <property type="entry name" value="TRNASYNTHLEU"/>
</dbReference>
<dbReference type="SUPFAM" id="SSF47323">
    <property type="entry name" value="Anticodon-binding domain of a subclass of class I aminoacyl-tRNA synthetases"/>
    <property type="match status" value="1"/>
</dbReference>
<dbReference type="SUPFAM" id="SSF52374">
    <property type="entry name" value="Nucleotidylyl transferase"/>
    <property type="match status" value="1"/>
</dbReference>
<dbReference type="SUPFAM" id="SSF50677">
    <property type="entry name" value="ValRS/IleRS/LeuRS editing domain"/>
    <property type="match status" value="1"/>
</dbReference>
<dbReference type="PROSITE" id="PS00178">
    <property type="entry name" value="AA_TRNA_LIGASE_I"/>
    <property type="match status" value="1"/>
</dbReference>
<feature type="chain" id="PRO_0000151964" description="Leucine--tRNA ligase">
    <location>
        <begin position="1"/>
        <end position="802"/>
    </location>
</feature>
<feature type="short sequence motif" description="'HIGH' region">
    <location>
        <begin position="40"/>
        <end position="51"/>
    </location>
</feature>
<feature type="short sequence motif" description="'KMSKS' region">
    <location>
        <begin position="576"/>
        <end position="580"/>
    </location>
</feature>
<feature type="binding site" evidence="1">
    <location>
        <position position="579"/>
    </location>
    <ligand>
        <name>ATP</name>
        <dbReference type="ChEBI" id="CHEBI:30616"/>
    </ligand>
</feature>
<sequence length="802" mass="91273">MSFNHQEIEKKWQGYWEENKTFRTPDETEKPKFYALDMFPYPSGAGLHVGHPEGYTATDILSRMKRMQGYNVLHPMGWDAFGLPAEQYALDTGNSPAEFTEHNINTFRNQIKSLGFSYDWDREVNTTDPNYYKWTQWIFLKLFEKGLAYVDEVPVNWCPALGTVLANEEIIDGKSERGGHPVERRPMRQWMLKITAYGDRLLEDLDELDWPESLKDMQRNWIGRSEGAEVHFNIDGTDEKFTVFTTRPDTLFGASYCVLAPEHALVADITTADQKEAVEAYINSVKMKSDLERTELAKEKTGVFTGAYAVNPVNGEKLPIWIADYVLATYGTGAVMAVPAHDERDYEFASTFNLPMKEVVKGGDITKEAYTGDGAHVNSAFLDGLNKEEAIAKMIEWLEVTSAGNQKVTYRLRDWLFSRQRYWGEPIPVIHWEDGTMTAVKEEELPLVLPKTENIRPSGTGESPLANIDEWVNVVDPETGKKGRRETNTMPQWAGSCWYYLRYIDPNNSEALVDPEKVKQWLPVDIYIGGAEHAVLHLLYARFWHKVLYDIGVVPTKEPFQQLFNQGMILGENNEKMSKSKGNVVNPDDIVASHGADTLRLYEMFMGPLDASIAWSENGLDGARRFLDRVWRLFVQDNGELSEKITDAPNKDLEKAYHQTVKKVTEDYAELRFNTAISQMMVFINDAYKAETLPKEYVEGFVKMIAPVAPHIGEELWSKLGYNETITYASWPTFDESKLVEDEVEIVVQVMGKVRAKLTMSKDASKDEMEKLALEAIQDQIEGKTVRKVIVVPGKLVNVVAN</sequence>
<comment type="catalytic activity">
    <reaction evidence="1">
        <text>tRNA(Leu) + L-leucine + ATP = L-leucyl-tRNA(Leu) + AMP + diphosphate</text>
        <dbReference type="Rhea" id="RHEA:11688"/>
        <dbReference type="Rhea" id="RHEA-COMP:9613"/>
        <dbReference type="Rhea" id="RHEA-COMP:9622"/>
        <dbReference type="ChEBI" id="CHEBI:30616"/>
        <dbReference type="ChEBI" id="CHEBI:33019"/>
        <dbReference type="ChEBI" id="CHEBI:57427"/>
        <dbReference type="ChEBI" id="CHEBI:78442"/>
        <dbReference type="ChEBI" id="CHEBI:78494"/>
        <dbReference type="ChEBI" id="CHEBI:456215"/>
        <dbReference type="EC" id="6.1.1.4"/>
    </reaction>
</comment>
<comment type="subcellular location">
    <subcellularLocation>
        <location evidence="1">Cytoplasm</location>
    </subcellularLocation>
</comment>
<comment type="similarity">
    <text evidence="1">Belongs to the class-I aminoacyl-tRNA synthetase family.</text>
</comment>
<protein>
    <recommendedName>
        <fullName evidence="1">Leucine--tRNA ligase</fullName>
        <ecNumber evidence="1">6.1.1.4</ecNumber>
    </recommendedName>
    <alternativeName>
        <fullName evidence="1">Leucyl-tRNA synthetase</fullName>
        <shortName evidence="1">LeuRS</shortName>
    </alternativeName>
</protein>
<accession>Q81KK6</accession>
<accession>Q6HS07</accession>
<accession>Q6KLB2</accession>
<keyword id="KW-0030">Aminoacyl-tRNA synthetase</keyword>
<keyword id="KW-0067">ATP-binding</keyword>
<keyword id="KW-0963">Cytoplasm</keyword>
<keyword id="KW-0436">Ligase</keyword>
<keyword id="KW-0547">Nucleotide-binding</keyword>
<keyword id="KW-0648">Protein biosynthesis</keyword>
<keyword id="KW-1185">Reference proteome</keyword>